<feature type="chain" id="PRO_0000442417" description="Putative O-acetyltransferase SAT14">
    <location>
        <begin position="1"/>
        <end position="455"/>
    </location>
</feature>
<dbReference type="EC" id="2.3.1.-" evidence="4"/>
<dbReference type="EMBL" id="KL648628">
    <property type="protein sequence ID" value="KEY67213.1"/>
    <property type="molecule type" value="Genomic_DNA"/>
</dbReference>
<dbReference type="SMR" id="A0A084API4"/>
<dbReference type="HOGENOM" id="CLU_039848_1_0_1"/>
<dbReference type="OrthoDB" id="286339at5125"/>
<dbReference type="Proteomes" id="UP000028045">
    <property type="component" value="Unassembled WGS sequence"/>
</dbReference>
<dbReference type="GO" id="GO:0016410">
    <property type="term" value="F:N-acyltransferase activity"/>
    <property type="evidence" value="ECO:0007669"/>
    <property type="project" value="TreeGrafter"/>
</dbReference>
<dbReference type="GO" id="GO:0019290">
    <property type="term" value="P:siderophore biosynthetic process"/>
    <property type="evidence" value="ECO:0007669"/>
    <property type="project" value="InterPro"/>
</dbReference>
<dbReference type="Gene3D" id="3.40.630.30">
    <property type="match status" value="1"/>
</dbReference>
<dbReference type="InterPro" id="IPR016181">
    <property type="entry name" value="Acyl_CoA_acyltransferase"/>
</dbReference>
<dbReference type="InterPro" id="IPR019432">
    <property type="entry name" value="Acyltransferase_MbtK/IucB-like"/>
</dbReference>
<dbReference type="PANTHER" id="PTHR31438:SF7">
    <property type="entry name" value="ACYLTRANSFERASE MBTK_IUCB-LIKE CONSERVED DOMAIN-CONTAINING PROTEIN"/>
    <property type="match status" value="1"/>
</dbReference>
<dbReference type="PANTHER" id="PTHR31438">
    <property type="entry name" value="LYSINE N-ACYLTRANSFERASE C17G9.06C-RELATED"/>
    <property type="match status" value="1"/>
</dbReference>
<dbReference type="Pfam" id="PF13523">
    <property type="entry name" value="Acetyltransf_8"/>
    <property type="match status" value="1"/>
</dbReference>
<dbReference type="SMART" id="SM01006">
    <property type="entry name" value="AlcB"/>
    <property type="match status" value="1"/>
</dbReference>
<dbReference type="SUPFAM" id="SSF55729">
    <property type="entry name" value="Acyl-CoA N-acyltransferases (Nat)"/>
    <property type="match status" value="1"/>
</dbReference>
<keyword id="KW-0012">Acyltransferase</keyword>
<keyword id="KW-0808">Transferase</keyword>
<sequence length="455" mass="52145">MATIPIRLQALATDQTVLKLPHPYKTEFAVRKASKASTKLPVYNLVPKPFPTRPLPFELHNDHLVFTDAIHLKSSELPPDSNNGAWARARRAPCVTLYWDGVEVPTLKQAWLVVYAFFTMRPGMDSFRLELDGNSAANLARQIKDVLLGIDHPIKARQQQEPCAKTKENTLLILRSTFWQGAGCPFGPRPVWCPQESPSSLLPSTCLSSFPLAPFHRTSTISLAGDPEDFDRCQQSWHPIRPAKPAPGSIIYSRWIPYLGEMFSMVALDPEDSEHVRLFHEWQSDPRVLQGWTETKTLDQHRRYLEALHKDPHQLTVLAKWDDSPFAYFELYWAKENRLGGYIDAGDFDRGRHSFVGDVRFRGPLRVSAWWSSLMHYLFLDDPRTMHIVGEPRDTHSTVLMYDFIHGFGLDRFIDLPSKRSAFMRCSRDRFFQSFPLEDSEKVIGGTSIRVVQKL</sequence>
<protein>
    <recommendedName>
        <fullName evidence="2">Putative O-acetyltransferase SAT14</fullName>
        <ecNumber evidence="4">2.3.1.-</ecNumber>
    </recommendedName>
    <alternativeName>
        <fullName evidence="2">Satratoxin biosynthesis SC2 cluster protein 14</fullName>
    </alternativeName>
</protein>
<organism>
    <name type="scientific">Stachybotrys chartarum (strain CBS 109288 / IBT 7711)</name>
    <name type="common">Toxic black mold</name>
    <name type="synonym">Stilbospora chartarum</name>
    <dbReference type="NCBI Taxonomy" id="1280523"/>
    <lineage>
        <taxon>Eukaryota</taxon>
        <taxon>Fungi</taxon>
        <taxon>Dikarya</taxon>
        <taxon>Ascomycota</taxon>
        <taxon>Pezizomycotina</taxon>
        <taxon>Sordariomycetes</taxon>
        <taxon>Hypocreomycetidae</taxon>
        <taxon>Hypocreales</taxon>
        <taxon>Stachybotryaceae</taxon>
        <taxon>Stachybotrys</taxon>
    </lineage>
</organism>
<proteinExistence type="inferred from homology"/>
<reference key="1">
    <citation type="journal article" date="2014" name="BMC Genomics">
        <title>Comparative genome sequencing reveals chemotype-specific gene clusters in the toxigenic black mold Stachybotrys.</title>
        <authorList>
            <person name="Semeiks J."/>
            <person name="Borek D."/>
            <person name="Otwinowski Z."/>
            <person name="Grishin N.V."/>
        </authorList>
    </citation>
    <scope>NUCLEOTIDE SEQUENCE [LARGE SCALE GENOMIC DNA]</scope>
    <scope>IDENTIFICATION</scope>
    <scope>FUNCTION</scope>
    <source>
        <strain>CBS 109288 / IBT 7711</strain>
    </source>
</reference>
<accession>A0A084API4</accession>
<gene>
    <name evidence="2" type="primary">SAT14</name>
    <name type="ORF">S7711_09752</name>
</gene>
<name>SAT14_STACB</name>
<comment type="function">
    <text evidence="4">Putative O-acetyltransferase; part of the satratoxin SC2 cluster involved in the biosynthesis of satratoxins, trichothecene mycotoxins that are associated with human food poisonings (PubMed:25015739). Satratoxins are suggested to be made by products of multiple gene clusters (SC1, SC2 and SC3) that encode 21 proteins in all, including polyketide synthases, acetyltransferases, and other enzymes expected to modify the trichothecene skeleton (PubMed:25015739). SC1 encodes 10 proteins, SAT1 to SAT10 (PubMed:25015739). The largest are SAT8, which encodes a putative polyketide synthase (PKS) with a conventional non-reducing architecture, and SAT10, a putative protein containing four ankyrin repeats and thus may be involved in protein scaffolding (PubMed:25015739). The putative short-chain reductase SAT3 may assist the PKS in some capacity (PubMed:25015739). SAT6 contains a secretory lipase domain and acts probably as a trichothecene esterase (PubMed:25015739). SAT5 encodes a putative acetyltransferase, and so, with SAT6, may affect endogenous protection from toxicity (PubMed:25015739). The probable transcription factor SAT9 may regulate the expression of the SC1 cluster (PubMed:25015739). SC2 encodes proteins SAT11 to SAT16, the largest of which encodes the putative reducing PKS SAT13 (PubMed:25015739). SAT11 is a cytochrome P450 monooxygenase, while SAT14 and SAT16 are probable acetyltransferases (PubMed:25015739). The SC2 cluster may be regulated by the transcription factor SAT15 (PubMed:25015739). SC3 is a small cluster that encodes 5 proteins, SAT17 to SAT21 (PubMed:25015739). SAT21 is a putative MFS-type transporter which may have a role in exporting secondary metabolites (PubMed:25015739). The four other proteins putatively encoded in SC3 include the taurine hydroxylase-like protein SAT17, the O-methyltransferase SAT18, the acetyltransferase SAT19, and the Cys6-type zinc finger SAT20, the latter being probably involved in regulation of SC3 expression (PubMed:25015739).</text>
</comment>
<comment type="pathway">
    <text evidence="1">Mycotoxin biosynthesis.</text>
</comment>
<comment type="miscellaneous">
    <text evidence="3">Trichothecenes are sesquiterpenoid toxins that act by inhibiting protein biosynthesis.</text>
</comment>
<comment type="similarity">
    <text evidence="3">Belongs to the lysine N-acyltransferase MbtK family.</text>
</comment>
<evidence type="ECO:0000269" key="1">
    <source>
    </source>
</evidence>
<evidence type="ECO:0000303" key="2">
    <source>
    </source>
</evidence>
<evidence type="ECO:0000305" key="3"/>
<evidence type="ECO:0000305" key="4">
    <source>
    </source>
</evidence>